<accession>C4ZWZ7</accession>
<keyword id="KW-1003">Cell membrane</keyword>
<keyword id="KW-0449">Lipoprotein</keyword>
<keyword id="KW-0472">Membrane</keyword>
<keyword id="KW-0564">Palmitate</keyword>
<keyword id="KW-0732">Signal</keyword>
<reference key="1">
    <citation type="journal article" date="2009" name="J. Bacteriol.">
        <title>Genomic sequencing reveals regulatory mutations and recombinational events in the widely used MC4100 lineage of Escherichia coli K-12.</title>
        <authorList>
            <person name="Ferenci T."/>
            <person name="Zhou Z."/>
            <person name="Betteridge T."/>
            <person name="Ren Y."/>
            <person name="Liu Y."/>
            <person name="Feng L."/>
            <person name="Reeves P.R."/>
            <person name="Wang L."/>
        </authorList>
    </citation>
    <scope>NUCLEOTIDE SEQUENCE [LARGE SCALE GENOMIC DNA]</scope>
    <source>
        <strain>K12 / MC4100 / BW2952</strain>
    </source>
</reference>
<dbReference type="EMBL" id="CP001396">
    <property type="protein sequence ID" value="ACR64871.1"/>
    <property type="molecule type" value="Genomic_DNA"/>
</dbReference>
<dbReference type="RefSeq" id="WP_001321287.1">
    <property type="nucleotide sequence ID" value="NC_012759.1"/>
</dbReference>
<dbReference type="SMR" id="C4ZWZ7"/>
<dbReference type="KEGG" id="ebw:BWG_1399"/>
<dbReference type="HOGENOM" id="CLU_1174761_0_0_6"/>
<dbReference type="GO" id="GO:0005886">
    <property type="term" value="C:plasma membrane"/>
    <property type="evidence" value="ECO:0007669"/>
    <property type="project" value="UniProtKB-SubCell"/>
</dbReference>
<dbReference type="HAMAP" id="MF_01065">
    <property type="entry name" value="UPF0257"/>
    <property type="match status" value="1"/>
</dbReference>
<dbReference type="InterPro" id="IPR010646">
    <property type="entry name" value="UPF0257"/>
</dbReference>
<dbReference type="NCBIfam" id="NF002798">
    <property type="entry name" value="PRK02939.1"/>
    <property type="match status" value="1"/>
</dbReference>
<dbReference type="Pfam" id="PF06788">
    <property type="entry name" value="UPF0257"/>
    <property type="match status" value="1"/>
</dbReference>
<dbReference type="PROSITE" id="PS51257">
    <property type="entry name" value="PROKAR_LIPOPROTEIN"/>
    <property type="match status" value="1"/>
</dbReference>
<protein>
    <recommendedName>
        <fullName evidence="1">UPF0257 lipoprotein YnfC</fullName>
    </recommendedName>
</protein>
<gene>
    <name evidence="1" type="primary">ynfC</name>
    <name type="ordered locus">BWG_1399</name>
</gene>
<sequence>MKYKLLPCLLAIFLTGCDRTEVTLSFTPEMASFSNEFDFDPLRGPVKDFTQTLMDEQGEVTKRVSGTLSEEGCFDSLELLDLENNTVVALVLDANYYRDAETLEKRVRLQGKCQLAELPSAGVSWETDDNGFVIKASSKQMQMEYRYDDQGYPLGKTTKSNDKTLSVSATPSTDPIKKLDYTAVTLLNNQRVGNVKQSCEYDSHANPVDCQLIIVDEGVKPAVERVYTIKNTIDYY</sequence>
<proteinExistence type="inferred from homology"/>
<organism>
    <name type="scientific">Escherichia coli (strain K12 / MC4100 / BW2952)</name>
    <dbReference type="NCBI Taxonomy" id="595496"/>
    <lineage>
        <taxon>Bacteria</taxon>
        <taxon>Pseudomonadati</taxon>
        <taxon>Pseudomonadota</taxon>
        <taxon>Gammaproteobacteria</taxon>
        <taxon>Enterobacterales</taxon>
        <taxon>Enterobacteriaceae</taxon>
        <taxon>Escherichia</taxon>
    </lineage>
</organism>
<evidence type="ECO:0000255" key="1">
    <source>
        <dbReference type="HAMAP-Rule" id="MF_01065"/>
    </source>
</evidence>
<feature type="signal peptide" evidence="1">
    <location>
        <begin position="1"/>
        <end position="16"/>
    </location>
</feature>
<feature type="chain" id="PRO_1000213464" description="UPF0257 lipoprotein YnfC">
    <location>
        <begin position="17"/>
        <end position="236"/>
    </location>
</feature>
<feature type="lipid moiety-binding region" description="N-palmitoyl cysteine" evidence="1">
    <location>
        <position position="17"/>
    </location>
</feature>
<feature type="lipid moiety-binding region" description="S-diacylglycerol cysteine" evidence="1">
    <location>
        <position position="17"/>
    </location>
</feature>
<name>YNFC_ECOBW</name>
<comment type="subcellular location">
    <subcellularLocation>
        <location evidence="1">Cell membrane</location>
        <topology evidence="1">Lipid-anchor</topology>
    </subcellularLocation>
</comment>
<comment type="similarity">
    <text evidence="1">Belongs to the UPF0257 family.</text>
</comment>